<evidence type="ECO:0000255" key="1">
    <source>
        <dbReference type="HAMAP-Rule" id="MF_00539"/>
    </source>
</evidence>
<evidence type="ECO:0000256" key="2">
    <source>
        <dbReference type="SAM" id="MobiDB-lite"/>
    </source>
</evidence>
<evidence type="ECO:0000305" key="3"/>
<proteinExistence type="inferred from homology"/>
<protein>
    <recommendedName>
        <fullName evidence="1">Large ribosomal subunit protein bL27</fullName>
    </recommendedName>
    <alternativeName>
        <fullName evidence="3">50S ribosomal protein L27</fullName>
    </alternativeName>
</protein>
<name>RL27_MICAN</name>
<comment type="similarity">
    <text evidence="1">Belongs to the bacterial ribosomal protein bL27 family.</text>
</comment>
<organism>
    <name type="scientific">Microcystis aeruginosa (strain NIES-843 / IAM M-2473)</name>
    <dbReference type="NCBI Taxonomy" id="449447"/>
    <lineage>
        <taxon>Bacteria</taxon>
        <taxon>Bacillati</taxon>
        <taxon>Cyanobacteriota</taxon>
        <taxon>Cyanophyceae</taxon>
        <taxon>Oscillatoriophycideae</taxon>
        <taxon>Chroococcales</taxon>
        <taxon>Microcystaceae</taxon>
        <taxon>Microcystis</taxon>
    </lineage>
</organism>
<accession>B0JQG5</accession>
<sequence>MAHKKGTGSTRNGRDSRSQRLGVKRYGGQVVKAGNILIRQRGTKVHPGKNVGRGGDDTLFALIDGVVKFEYKDKSRRQVSVYPAEVSAS</sequence>
<keyword id="KW-0687">Ribonucleoprotein</keyword>
<keyword id="KW-0689">Ribosomal protein</keyword>
<reference key="1">
    <citation type="journal article" date="2007" name="DNA Res.">
        <title>Complete genomic structure of the bloom-forming toxic cyanobacterium Microcystis aeruginosa NIES-843.</title>
        <authorList>
            <person name="Kaneko T."/>
            <person name="Nakajima N."/>
            <person name="Okamoto S."/>
            <person name="Suzuki I."/>
            <person name="Tanabe Y."/>
            <person name="Tamaoki M."/>
            <person name="Nakamura Y."/>
            <person name="Kasai F."/>
            <person name="Watanabe A."/>
            <person name="Kawashima K."/>
            <person name="Kishida Y."/>
            <person name="Ono A."/>
            <person name="Shimizu Y."/>
            <person name="Takahashi C."/>
            <person name="Minami C."/>
            <person name="Fujishiro T."/>
            <person name="Kohara M."/>
            <person name="Katoh M."/>
            <person name="Nakazaki N."/>
            <person name="Nakayama S."/>
            <person name="Yamada M."/>
            <person name="Tabata S."/>
            <person name="Watanabe M.M."/>
        </authorList>
    </citation>
    <scope>NUCLEOTIDE SEQUENCE [LARGE SCALE GENOMIC DNA]</scope>
    <source>
        <strain>NIES-843 / IAM M-247</strain>
    </source>
</reference>
<feature type="chain" id="PRO_1000081896" description="Large ribosomal subunit protein bL27">
    <location>
        <begin position="1"/>
        <end position="89"/>
    </location>
</feature>
<feature type="region of interest" description="Disordered" evidence="2">
    <location>
        <begin position="1"/>
        <end position="24"/>
    </location>
</feature>
<gene>
    <name evidence="1" type="primary">rpmA</name>
    <name evidence="1" type="synonym">rpl27</name>
    <name type="ordered locus">MAE_08020</name>
</gene>
<dbReference type="EMBL" id="AP009552">
    <property type="protein sequence ID" value="BAG00624.1"/>
    <property type="molecule type" value="Genomic_DNA"/>
</dbReference>
<dbReference type="RefSeq" id="WP_002744094.1">
    <property type="nucleotide sequence ID" value="NC_010296.1"/>
</dbReference>
<dbReference type="SMR" id="B0JQG5"/>
<dbReference type="STRING" id="449447.MAE_08020"/>
<dbReference type="PaxDb" id="449447-MAE_08020"/>
<dbReference type="EnsemblBacteria" id="BAG00624">
    <property type="protein sequence ID" value="BAG00624"/>
    <property type="gene ID" value="MAE_08020"/>
</dbReference>
<dbReference type="GeneID" id="66705276"/>
<dbReference type="KEGG" id="mar:MAE_08020"/>
<dbReference type="eggNOG" id="COG0211">
    <property type="taxonomic scope" value="Bacteria"/>
</dbReference>
<dbReference type="HOGENOM" id="CLU_095424_4_0_3"/>
<dbReference type="BioCyc" id="MAER449447:MAE_RS03580-MONOMER"/>
<dbReference type="Proteomes" id="UP000001510">
    <property type="component" value="Chromosome"/>
</dbReference>
<dbReference type="GO" id="GO:0022625">
    <property type="term" value="C:cytosolic large ribosomal subunit"/>
    <property type="evidence" value="ECO:0007669"/>
    <property type="project" value="TreeGrafter"/>
</dbReference>
<dbReference type="GO" id="GO:0003735">
    <property type="term" value="F:structural constituent of ribosome"/>
    <property type="evidence" value="ECO:0007669"/>
    <property type="project" value="InterPro"/>
</dbReference>
<dbReference type="GO" id="GO:0006412">
    <property type="term" value="P:translation"/>
    <property type="evidence" value="ECO:0007669"/>
    <property type="project" value="UniProtKB-UniRule"/>
</dbReference>
<dbReference type="FunFam" id="2.40.50.100:FF:000004">
    <property type="entry name" value="50S ribosomal protein L27"/>
    <property type="match status" value="1"/>
</dbReference>
<dbReference type="Gene3D" id="2.40.50.100">
    <property type="match status" value="1"/>
</dbReference>
<dbReference type="HAMAP" id="MF_00539">
    <property type="entry name" value="Ribosomal_bL27"/>
    <property type="match status" value="1"/>
</dbReference>
<dbReference type="InterPro" id="IPR001684">
    <property type="entry name" value="Ribosomal_bL27"/>
</dbReference>
<dbReference type="InterPro" id="IPR018261">
    <property type="entry name" value="Ribosomal_bL27_CS"/>
</dbReference>
<dbReference type="NCBIfam" id="TIGR00062">
    <property type="entry name" value="L27"/>
    <property type="match status" value="1"/>
</dbReference>
<dbReference type="PANTHER" id="PTHR15893:SF0">
    <property type="entry name" value="LARGE RIBOSOMAL SUBUNIT PROTEIN BL27M"/>
    <property type="match status" value="1"/>
</dbReference>
<dbReference type="PANTHER" id="PTHR15893">
    <property type="entry name" value="RIBOSOMAL PROTEIN L27"/>
    <property type="match status" value="1"/>
</dbReference>
<dbReference type="Pfam" id="PF01016">
    <property type="entry name" value="Ribosomal_L27"/>
    <property type="match status" value="1"/>
</dbReference>
<dbReference type="PRINTS" id="PR00063">
    <property type="entry name" value="RIBOSOMALL27"/>
</dbReference>
<dbReference type="SUPFAM" id="SSF110324">
    <property type="entry name" value="Ribosomal L27 protein-like"/>
    <property type="match status" value="1"/>
</dbReference>
<dbReference type="PROSITE" id="PS00831">
    <property type="entry name" value="RIBOSOMAL_L27"/>
    <property type="match status" value="1"/>
</dbReference>